<accession>Q4UAQ0</accession>
<protein>
    <recommendedName>
        <fullName evidence="2">Adenylosuccinate synthetase</fullName>
        <shortName evidence="2">AMPSase</shortName>
        <shortName evidence="2">AdSS</shortName>
        <ecNumber evidence="2">6.3.4.4</ecNumber>
    </recommendedName>
    <alternativeName>
        <fullName evidence="2">IMP--aspartate ligase</fullName>
    </alternativeName>
</protein>
<dbReference type="EC" id="6.3.4.4" evidence="2"/>
<dbReference type="EMBL" id="CR940353">
    <property type="protein sequence ID" value="CAI76101.1"/>
    <property type="molecule type" value="Genomic_DNA"/>
</dbReference>
<dbReference type="RefSeq" id="XP_952727.1">
    <property type="nucleotide sequence ID" value="XM_947634.1"/>
</dbReference>
<dbReference type="SMR" id="Q4UAQ0"/>
<dbReference type="FunCoup" id="Q4UAQ0">
    <property type="interactions" value="268"/>
</dbReference>
<dbReference type="STRING" id="5874.Q4UAQ0"/>
<dbReference type="GeneID" id="3862603"/>
<dbReference type="KEGG" id="tan:TA17235"/>
<dbReference type="VEuPathDB" id="PiroplasmaDB:TA17235"/>
<dbReference type="eggNOG" id="KOG1355">
    <property type="taxonomic scope" value="Eukaryota"/>
</dbReference>
<dbReference type="InParanoid" id="Q4UAQ0"/>
<dbReference type="OMA" id="FHHAKPI"/>
<dbReference type="OrthoDB" id="10265645at2759"/>
<dbReference type="UniPathway" id="UPA00075">
    <property type="reaction ID" value="UER00335"/>
</dbReference>
<dbReference type="Proteomes" id="UP000001950">
    <property type="component" value="Chromosome 4"/>
</dbReference>
<dbReference type="GO" id="GO:0005737">
    <property type="term" value="C:cytoplasm"/>
    <property type="evidence" value="ECO:0007669"/>
    <property type="project" value="UniProtKB-SubCell"/>
</dbReference>
<dbReference type="GO" id="GO:0004019">
    <property type="term" value="F:adenylosuccinate synthase activity"/>
    <property type="evidence" value="ECO:0007669"/>
    <property type="project" value="UniProtKB-UniRule"/>
</dbReference>
<dbReference type="GO" id="GO:0005525">
    <property type="term" value="F:GTP binding"/>
    <property type="evidence" value="ECO:0007669"/>
    <property type="project" value="UniProtKB-UniRule"/>
</dbReference>
<dbReference type="GO" id="GO:0000287">
    <property type="term" value="F:magnesium ion binding"/>
    <property type="evidence" value="ECO:0007669"/>
    <property type="project" value="UniProtKB-UniRule"/>
</dbReference>
<dbReference type="GO" id="GO:0044208">
    <property type="term" value="P:'de novo' AMP biosynthetic process"/>
    <property type="evidence" value="ECO:0007669"/>
    <property type="project" value="UniProtKB-UniRule"/>
</dbReference>
<dbReference type="GO" id="GO:0046040">
    <property type="term" value="P:IMP metabolic process"/>
    <property type="evidence" value="ECO:0007669"/>
    <property type="project" value="TreeGrafter"/>
</dbReference>
<dbReference type="CDD" id="cd03108">
    <property type="entry name" value="AdSS"/>
    <property type="match status" value="1"/>
</dbReference>
<dbReference type="Gene3D" id="3.40.440.10">
    <property type="entry name" value="Adenylosuccinate Synthetase, subunit A, domain 1"/>
    <property type="match status" value="1"/>
</dbReference>
<dbReference type="Gene3D" id="1.10.300.10">
    <property type="entry name" value="Adenylosuccinate Synthetase, subunit A, domain 2"/>
    <property type="match status" value="1"/>
</dbReference>
<dbReference type="Gene3D" id="3.90.170.10">
    <property type="entry name" value="Adenylosuccinate Synthetase, subunit A, domain 3"/>
    <property type="match status" value="1"/>
</dbReference>
<dbReference type="HAMAP" id="MF_00011">
    <property type="entry name" value="Adenylosucc_synth"/>
    <property type="match status" value="1"/>
</dbReference>
<dbReference type="InterPro" id="IPR018220">
    <property type="entry name" value="Adenylosuccin_syn_GTP-bd"/>
</dbReference>
<dbReference type="InterPro" id="IPR042109">
    <property type="entry name" value="Adenylosuccinate_synth_dom1"/>
</dbReference>
<dbReference type="InterPro" id="IPR042110">
    <property type="entry name" value="Adenylosuccinate_synth_dom2"/>
</dbReference>
<dbReference type="InterPro" id="IPR042111">
    <property type="entry name" value="Adenylosuccinate_synth_dom3"/>
</dbReference>
<dbReference type="InterPro" id="IPR001114">
    <property type="entry name" value="Adenylosuccinate_synthetase"/>
</dbReference>
<dbReference type="InterPro" id="IPR027417">
    <property type="entry name" value="P-loop_NTPase"/>
</dbReference>
<dbReference type="NCBIfam" id="NF002223">
    <property type="entry name" value="PRK01117.1"/>
    <property type="match status" value="1"/>
</dbReference>
<dbReference type="NCBIfam" id="TIGR00184">
    <property type="entry name" value="purA"/>
    <property type="match status" value="1"/>
</dbReference>
<dbReference type="PANTHER" id="PTHR11846">
    <property type="entry name" value="ADENYLOSUCCINATE SYNTHETASE"/>
    <property type="match status" value="1"/>
</dbReference>
<dbReference type="PANTHER" id="PTHR11846:SF0">
    <property type="entry name" value="ADENYLOSUCCINATE SYNTHETASE"/>
    <property type="match status" value="1"/>
</dbReference>
<dbReference type="Pfam" id="PF00709">
    <property type="entry name" value="Adenylsucc_synt"/>
    <property type="match status" value="1"/>
</dbReference>
<dbReference type="SMART" id="SM00788">
    <property type="entry name" value="Adenylsucc_synt"/>
    <property type="match status" value="1"/>
</dbReference>
<dbReference type="SUPFAM" id="SSF52540">
    <property type="entry name" value="P-loop containing nucleoside triphosphate hydrolases"/>
    <property type="match status" value="1"/>
</dbReference>
<dbReference type="PROSITE" id="PS01266">
    <property type="entry name" value="ADENYLOSUCCIN_SYN_1"/>
    <property type="match status" value="1"/>
</dbReference>
<gene>
    <name type="ORF">TA17235</name>
</gene>
<organism>
    <name type="scientific">Theileria annulata</name>
    <dbReference type="NCBI Taxonomy" id="5874"/>
    <lineage>
        <taxon>Eukaryota</taxon>
        <taxon>Sar</taxon>
        <taxon>Alveolata</taxon>
        <taxon>Apicomplexa</taxon>
        <taxon>Aconoidasida</taxon>
        <taxon>Piroplasmida</taxon>
        <taxon>Theileriidae</taxon>
        <taxon>Theileria</taxon>
    </lineage>
</organism>
<reference key="1">
    <citation type="journal article" date="2005" name="Science">
        <title>Genome of the host-cell transforming parasite Theileria annulata compared with T. parva.</title>
        <authorList>
            <person name="Pain A."/>
            <person name="Renauld H."/>
            <person name="Berriman M."/>
            <person name="Murphy L."/>
            <person name="Yeats C.A."/>
            <person name="Weir W."/>
            <person name="Kerhornou A."/>
            <person name="Aslett M."/>
            <person name="Bishop R."/>
            <person name="Bouchier C."/>
            <person name="Cochet M."/>
            <person name="Coulson R.M.R."/>
            <person name="Cronin A."/>
            <person name="de Villiers E.P."/>
            <person name="Fraser A."/>
            <person name="Fosker N."/>
            <person name="Gardner M."/>
            <person name="Goble A."/>
            <person name="Griffiths-Jones S."/>
            <person name="Harris D.E."/>
            <person name="Katzer F."/>
            <person name="Larke N."/>
            <person name="Lord A."/>
            <person name="Maser P."/>
            <person name="McKellar S."/>
            <person name="Mooney P."/>
            <person name="Morton F."/>
            <person name="Nene V."/>
            <person name="O'Neil S."/>
            <person name="Price C."/>
            <person name="Quail M.A."/>
            <person name="Rabbinowitsch E."/>
            <person name="Rawlings N.D."/>
            <person name="Rutter S."/>
            <person name="Saunders D."/>
            <person name="Seeger K."/>
            <person name="Shah T."/>
            <person name="Squares R."/>
            <person name="Squares S."/>
            <person name="Tivey A."/>
            <person name="Walker A.R."/>
            <person name="Woodward J."/>
            <person name="Dobbelaere D.A.E."/>
            <person name="Langsley G."/>
            <person name="Rajandream M.A."/>
            <person name="McKeever D."/>
            <person name="Shiels B."/>
            <person name="Tait A."/>
            <person name="Barrell B.G."/>
            <person name="Hall N."/>
        </authorList>
    </citation>
    <scope>NUCLEOTIDE SEQUENCE [LARGE SCALE GENOMIC DNA]</scope>
    <source>
        <strain>Ankara</strain>
    </source>
</reference>
<name>PURA_THEAN</name>
<keyword id="KW-0963">Cytoplasm</keyword>
<keyword id="KW-0342">GTP-binding</keyword>
<keyword id="KW-0436">Ligase</keyword>
<keyword id="KW-0460">Magnesium</keyword>
<keyword id="KW-0479">Metal-binding</keyword>
<keyword id="KW-0547">Nucleotide-binding</keyword>
<keyword id="KW-0658">Purine biosynthesis</keyword>
<keyword id="KW-1185">Reference proteome</keyword>
<sequence>MVERRCYDKVNDKVLLISGMQWGDEGKGKLVTHLSKDFDLVARYNGGHNSGHEMYLDGVKYKLHSLPCGVLVPNTLNVLGNGVVVHLESLLSEIDGLLKLGIDLTNRLFISERAHLVLDLHIAIDSQLESEQGEYSTTIGTTKRGIGPTNSTKCKRTGIQLGELLNWDNFEKLLTKLTYKLNHENKVFSNSDLADLLNKELEIYKTNFSKIAHCVCDTSYMIQKYIKEGKKVFFEGANGALLDLALGTYPYVTSSNTTTSGVYNGLGISPSVKILKVGVLKAYQTRIGQGPFPTELFDDNYVKLQKHGSEVGVTTGRTRRCGWLDLVSAKYVQGFSGFDVINLTKLDVLSQFDEVKLCTNYKHKVTGTTLKNLLPPFRYLHNTIYREFLEEGRYPNCCYQFDEYEPVYKTMPGWKTDISDFKTFEQLPQNAQNYVLFIEEYLGVFIHWVCLFINNITFRWELAKMLIK</sequence>
<comment type="function">
    <text evidence="1">Plays an important role in the salvage pathway for purine nucleotide biosynthesis. Catalyzes the first committed step in the biosynthesis of AMP from IMP (By similarity).</text>
</comment>
<comment type="catalytic activity">
    <reaction evidence="2">
        <text>IMP + L-aspartate + GTP = N(6)-(1,2-dicarboxyethyl)-AMP + GDP + phosphate + 2 H(+)</text>
        <dbReference type="Rhea" id="RHEA:15753"/>
        <dbReference type="ChEBI" id="CHEBI:15378"/>
        <dbReference type="ChEBI" id="CHEBI:29991"/>
        <dbReference type="ChEBI" id="CHEBI:37565"/>
        <dbReference type="ChEBI" id="CHEBI:43474"/>
        <dbReference type="ChEBI" id="CHEBI:57567"/>
        <dbReference type="ChEBI" id="CHEBI:58053"/>
        <dbReference type="ChEBI" id="CHEBI:58189"/>
        <dbReference type="EC" id="6.3.4.4"/>
    </reaction>
</comment>
<comment type="cofactor">
    <cofactor evidence="2">
        <name>Mg(2+)</name>
        <dbReference type="ChEBI" id="CHEBI:18420"/>
    </cofactor>
    <text evidence="2">Binds 1 Mg(2+) ion per subunit.</text>
</comment>
<comment type="pathway">
    <text evidence="2">Purine metabolism; AMP biosynthesis via de novo pathway; AMP from IMP: step 1/2.</text>
</comment>
<comment type="subunit">
    <text evidence="2">Homodimer.</text>
</comment>
<comment type="subcellular location">
    <subcellularLocation>
        <location evidence="2">Cytoplasm</location>
    </subcellularLocation>
</comment>
<comment type="miscellaneous">
    <text>Parasitic protozoa lack the de novo purine biosynthesis pathway and rely exclusively on the salvage pathway for their purine nucleotide requirements.</text>
</comment>
<comment type="similarity">
    <text evidence="2">Belongs to the adenylosuccinate synthetase family.</text>
</comment>
<proteinExistence type="inferred from homology"/>
<feature type="chain" id="PRO_0000399298" description="Adenylosuccinate synthetase">
    <location>
        <begin position="1"/>
        <end position="468"/>
    </location>
</feature>
<feature type="active site" description="Proton acceptor" evidence="2">
    <location>
        <position position="24"/>
    </location>
</feature>
<feature type="active site" description="Proton donor" evidence="2">
    <location>
        <position position="52"/>
    </location>
</feature>
<feature type="binding site" evidence="2">
    <location>
        <begin position="23"/>
        <end position="29"/>
    </location>
    <ligand>
        <name>GTP</name>
        <dbReference type="ChEBI" id="CHEBI:37565"/>
    </ligand>
</feature>
<feature type="binding site" description="in other chain" evidence="2">
    <location>
        <begin position="24"/>
        <end position="27"/>
    </location>
    <ligand>
        <name>IMP</name>
        <dbReference type="ChEBI" id="CHEBI:58053"/>
        <note>ligand shared between dimeric partners</note>
    </ligand>
</feature>
<feature type="binding site" evidence="2">
    <location>
        <position position="24"/>
    </location>
    <ligand>
        <name>Mg(2+)</name>
        <dbReference type="ChEBI" id="CHEBI:18420"/>
    </ligand>
</feature>
<feature type="binding site" description="in other chain" evidence="2">
    <location>
        <begin position="49"/>
        <end position="52"/>
    </location>
    <ligand>
        <name>IMP</name>
        <dbReference type="ChEBI" id="CHEBI:58053"/>
        <note>ligand shared between dimeric partners</note>
    </ligand>
</feature>
<feature type="binding site" evidence="2">
    <location>
        <begin position="51"/>
        <end position="53"/>
    </location>
    <ligand>
        <name>GTP</name>
        <dbReference type="ChEBI" id="CHEBI:37565"/>
    </ligand>
</feature>
<feature type="binding site" evidence="2">
    <location>
        <position position="51"/>
    </location>
    <ligand>
        <name>Mg(2+)</name>
        <dbReference type="ChEBI" id="CHEBI:18420"/>
    </ligand>
</feature>
<feature type="binding site" description="in other chain" evidence="2">
    <location>
        <position position="142"/>
    </location>
    <ligand>
        <name>IMP</name>
        <dbReference type="ChEBI" id="CHEBI:58053"/>
        <note>ligand shared between dimeric partners</note>
    </ligand>
</feature>
<feature type="binding site" evidence="2">
    <location>
        <position position="156"/>
    </location>
    <ligand>
        <name>IMP</name>
        <dbReference type="ChEBI" id="CHEBI:58053"/>
        <note>ligand shared between dimeric partners</note>
    </ligand>
</feature>
<feature type="binding site" description="in other chain" evidence="2">
    <location>
        <position position="238"/>
    </location>
    <ligand>
        <name>IMP</name>
        <dbReference type="ChEBI" id="CHEBI:58053"/>
        <note>ligand shared between dimeric partners</note>
    </ligand>
</feature>
<feature type="binding site" description="in other chain" evidence="2">
    <location>
        <position position="253"/>
    </location>
    <ligand>
        <name>IMP</name>
        <dbReference type="ChEBI" id="CHEBI:58053"/>
        <note>ligand shared between dimeric partners</note>
    </ligand>
</feature>
<feature type="binding site" evidence="2">
    <location>
        <begin position="313"/>
        <end position="319"/>
    </location>
    <ligand>
        <name>substrate</name>
    </ligand>
</feature>
<feature type="binding site" description="in other chain" evidence="2">
    <location>
        <position position="317"/>
    </location>
    <ligand>
        <name>IMP</name>
        <dbReference type="ChEBI" id="CHEBI:58053"/>
        <note>ligand shared between dimeric partners</note>
    </ligand>
</feature>
<feature type="binding site" evidence="2">
    <location>
        <position position="319"/>
    </location>
    <ligand>
        <name>GTP</name>
        <dbReference type="ChEBI" id="CHEBI:37565"/>
    </ligand>
</feature>
<feature type="binding site" evidence="2">
    <location>
        <begin position="345"/>
        <end position="347"/>
    </location>
    <ligand>
        <name>GTP</name>
        <dbReference type="ChEBI" id="CHEBI:37565"/>
    </ligand>
</feature>
<evidence type="ECO:0000250" key="1"/>
<evidence type="ECO:0000255" key="2">
    <source>
        <dbReference type="HAMAP-Rule" id="MF_03125"/>
    </source>
</evidence>